<dbReference type="EMBL" id="AE008923">
    <property type="protein sequence ID" value="AAM37579.1"/>
    <property type="molecule type" value="Genomic_DNA"/>
</dbReference>
<dbReference type="RefSeq" id="WP_003485476.1">
    <property type="nucleotide sequence ID" value="NC_003919.1"/>
</dbReference>
<dbReference type="SMR" id="Q8PJ11"/>
<dbReference type="GeneID" id="66911824"/>
<dbReference type="KEGG" id="xac:XAC2734"/>
<dbReference type="eggNOG" id="COG0782">
    <property type="taxonomic scope" value="Bacteria"/>
</dbReference>
<dbReference type="HOGENOM" id="CLU_101379_3_0_6"/>
<dbReference type="Proteomes" id="UP000000576">
    <property type="component" value="Chromosome"/>
</dbReference>
<dbReference type="GO" id="GO:0003677">
    <property type="term" value="F:DNA binding"/>
    <property type="evidence" value="ECO:0007669"/>
    <property type="project" value="UniProtKB-UniRule"/>
</dbReference>
<dbReference type="GO" id="GO:0070063">
    <property type="term" value="F:RNA polymerase binding"/>
    <property type="evidence" value="ECO:0007669"/>
    <property type="project" value="InterPro"/>
</dbReference>
<dbReference type="GO" id="GO:0006354">
    <property type="term" value="P:DNA-templated transcription elongation"/>
    <property type="evidence" value="ECO:0007669"/>
    <property type="project" value="TreeGrafter"/>
</dbReference>
<dbReference type="GO" id="GO:0032784">
    <property type="term" value="P:regulation of DNA-templated transcription elongation"/>
    <property type="evidence" value="ECO:0007669"/>
    <property type="project" value="UniProtKB-UniRule"/>
</dbReference>
<dbReference type="FunFam" id="1.10.287.180:FF:000001">
    <property type="entry name" value="Transcription elongation factor GreA"/>
    <property type="match status" value="1"/>
</dbReference>
<dbReference type="FunFam" id="3.10.50.30:FF:000001">
    <property type="entry name" value="Transcription elongation factor GreA"/>
    <property type="match status" value="1"/>
</dbReference>
<dbReference type="Gene3D" id="3.10.50.30">
    <property type="entry name" value="Transcription elongation factor, GreA/GreB, C-terminal domain"/>
    <property type="match status" value="1"/>
</dbReference>
<dbReference type="Gene3D" id="1.10.287.180">
    <property type="entry name" value="Transcription elongation factor, GreA/GreB, N-terminal domain"/>
    <property type="match status" value="1"/>
</dbReference>
<dbReference type="HAMAP" id="MF_00105">
    <property type="entry name" value="GreA_GreB"/>
    <property type="match status" value="1"/>
</dbReference>
<dbReference type="HAMAP" id="MF_00930">
    <property type="entry name" value="GreB"/>
    <property type="match status" value="1"/>
</dbReference>
<dbReference type="InterPro" id="IPR036953">
    <property type="entry name" value="GreA/GreB_C_sf"/>
</dbReference>
<dbReference type="InterPro" id="IPR018151">
    <property type="entry name" value="TF_GreA/GreB_CS"/>
</dbReference>
<dbReference type="InterPro" id="IPR028624">
    <property type="entry name" value="Tscrpt_elong_fac_GreA/B"/>
</dbReference>
<dbReference type="InterPro" id="IPR001437">
    <property type="entry name" value="Tscrpt_elong_fac_GreA/B_C"/>
</dbReference>
<dbReference type="InterPro" id="IPR023459">
    <property type="entry name" value="Tscrpt_elong_fac_GreA/B_fam"/>
</dbReference>
<dbReference type="InterPro" id="IPR022691">
    <property type="entry name" value="Tscrpt_elong_fac_GreA/B_N"/>
</dbReference>
<dbReference type="InterPro" id="IPR036805">
    <property type="entry name" value="Tscrpt_elong_fac_GreA/B_N_sf"/>
</dbReference>
<dbReference type="InterPro" id="IPR006358">
    <property type="entry name" value="Tscrpt_elong_fac_GreB"/>
</dbReference>
<dbReference type="NCBIfam" id="TIGR01461">
    <property type="entry name" value="greB"/>
    <property type="match status" value="1"/>
</dbReference>
<dbReference type="NCBIfam" id="NF002506">
    <property type="entry name" value="PRK01885.1"/>
    <property type="match status" value="1"/>
</dbReference>
<dbReference type="PANTHER" id="PTHR30437">
    <property type="entry name" value="TRANSCRIPTION ELONGATION FACTOR GREA"/>
    <property type="match status" value="1"/>
</dbReference>
<dbReference type="PANTHER" id="PTHR30437:SF6">
    <property type="entry name" value="TRANSCRIPTION ELONGATION FACTOR GREB"/>
    <property type="match status" value="1"/>
</dbReference>
<dbReference type="Pfam" id="PF01272">
    <property type="entry name" value="GreA_GreB"/>
    <property type="match status" value="1"/>
</dbReference>
<dbReference type="Pfam" id="PF03449">
    <property type="entry name" value="GreA_GreB_N"/>
    <property type="match status" value="1"/>
</dbReference>
<dbReference type="PIRSF" id="PIRSF006092">
    <property type="entry name" value="GreA_GreB"/>
    <property type="match status" value="1"/>
</dbReference>
<dbReference type="SUPFAM" id="SSF54534">
    <property type="entry name" value="FKBP-like"/>
    <property type="match status" value="1"/>
</dbReference>
<dbReference type="SUPFAM" id="SSF46557">
    <property type="entry name" value="GreA transcript cleavage protein, N-terminal domain"/>
    <property type="match status" value="1"/>
</dbReference>
<dbReference type="PROSITE" id="PS00829">
    <property type="entry name" value="GREAB_1"/>
    <property type="match status" value="1"/>
</dbReference>
<dbReference type="PROSITE" id="PS00830">
    <property type="entry name" value="GREAB_2"/>
    <property type="match status" value="1"/>
</dbReference>
<proteinExistence type="inferred from homology"/>
<sequence>MSRWRPPAEKSTALITPEGHARLKAELDDLWRVRRPEVVRALAAAAAEGDRSENAEYTYRKKQLGEIDRRVRYLSKRLEALRVVDTAPTDANAVFFGAQVELEDAGSGELLRYRIVGPDETDAGRGWISIDSPLARALLKKRVDDEFDAHLPAGKHTFVVVSVDYASL</sequence>
<name>GREB_XANAC</name>
<feature type="chain" id="PRO_0000176998" description="Transcription elongation factor GreB">
    <location>
        <begin position="1"/>
        <end position="168"/>
    </location>
</feature>
<evidence type="ECO:0000255" key="1">
    <source>
        <dbReference type="HAMAP-Rule" id="MF_00930"/>
    </source>
</evidence>
<gene>
    <name evidence="1" type="primary">greB</name>
    <name type="ordered locus">XAC2734</name>
</gene>
<organism>
    <name type="scientific">Xanthomonas axonopodis pv. citri (strain 306)</name>
    <dbReference type="NCBI Taxonomy" id="190486"/>
    <lineage>
        <taxon>Bacteria</taxon>
        <taxon>Pseudomonadati</taxon>
        <taxon>Pseudomonadota</taxon>
        <taxon>Gammaproteobacteria</taxon>
        <taxon>Lysobacterales</taxon>
        <taxon>Lysobacteraceae</taxon>
        <taxon>Xanthomonas</taxon>
    </lineage>
</organism>
<reference key="1">
    <citation type="journal article" date="2002" name="Nature">
        <title>Comparison of the genomes of two Xanthomonas pathogens with differing host specificities.</title>
        <authorList>
            <person name="da Silva A.C.R."/>
            <person name="Ferro J.A."/>
            <person name="Reinach F.C."/>
            <person name="Farah C.S."/>
            <person name="Furlan L.R."/>
            <person name="Quaggio R.B."/>
            <person name="Monteiro-Vitorello C.B."/>
            <person name="Van Sluys M.A."/>
            <person name="Almeida N.F. Jr."/>
            <person name="Alves L.M.C."/>
            <person name="do Amaral A.M."/>
            <person name="Bertolini M.C."/>
            <person name="Camargo L.E.A."/>
            <person name="Camarotte G."/>
            <person name="Cannavan F."/>
            <person name="Cardozo J."/>
            <person name="Chambergo F."/>
            <person name="Ciapina L.P."/>
            <person name="Cicarelli R.M.B."/>
            <person name="Coutinho L.L."/>
            <person name="Cursino-Santos J.R."/>
            <person name="El-Dorry H."/>
            <person name="Faria J.B."/>
            <person name="Ferreira A.J.S."/>
            <person name="Ferreira R.C.C."/>
            <person name="Ferro M.I.T."/>
            <person name="Formighieri E.F."/>
            <person name="Franco M.C."/>
            <person name="Greggio C.C."/>
            <person name="Gruber A."/>
            <person name="Katsuyama A.M."/>
            <person name="Kishi L.T."/>
            <person name="Leite R.P."/>
            <person name="Lemos E.G.M."/>
            <person name="Lemos M.V.F."/>
            <person name="Locali E.C."/>
            <person name="Machado M.A."/>
            <person name="Madeira A.M.B.N."/>
            <person name="Martinez-Rossi N.M."/>
            <person name="Martins E.C."/>
            <person name="Meidanis J."/>
            <person name="Menck C.F.M."/>
            <person name="Miyaki C.Y."/>
            <person name="Moon D.H."/>
            <person name="Moreira L.M."/>
            <person name="Novo M.T.M."/>
            <person name="Okura V.K."/>
            <person name="Oliveira M.C."/>
            <person name="Oliveira V.R."/>
            <person name="Pereira H.A."/>
            <person name="Rossi A."/>
            <person name="Sena J.A.D."/>
            <person name="Silva C."/>
            <person name="de Souza R.F."/>
            <person name="Spinola L.A.F."/>
            <person name="Takita M.A."/>
            <person name="Tamura R.E."/>
            <person name="Teixeira E.C."/>
            <person name="Tezza R.I.D."/>
            <person name="Trindade dos Santos M."/>
            <person name="Truffi D."/>
            <person name="Tsai S.M."/>
            <person name="White F.F."/>
            <person name="Setubal J.C."/>
            <person name="Kitajima J.P."/>
        </authorList>
    </citation>
    <scope>NUCLEOTIDE SEQUENCE [LARGE SCALE GENOMIC DNA]</scope>
    <source>
        <strain>306</strain>
    </source>
</reference>
<keyword id="KW-0238">DNA-binding</keyword>
<keyword id="KW-0804">Transcription</keyword>
<keyword id="KW-0805">Transcription regulation</keyword>
<comment type="function">
    <text evidence="1">Necessary for efficient RNA polymerase transcription elongation past template-encoded arresting sites. The arresting sites in DNA have the property of trapping a certain fraction of elongating RNA polymerases that pass through, resulting in locked ternary complexes. Cleavage of the nascent transcript by cleavage factors such as GreA or GreB allows the resumption of elongation from the new 3'terminus. GreB releases sequences of up to 9 nucleotides in length.</text>
</comment>
<comment type="similarity">
    <text evidence="1">Belongs to the GreA/GreB family. GreB subfamily.</text>
</comment>
<accession>Q8PJ11</accession>
<protein>
    <recommendedName>
        <fullName evidence="1">Transcription elongation factor GreB</fullName>
    </recommendedName>
    <alternativeName>
        <fullName evidence="1">Transcript cleavage factor GreB</fullName>
    </alternativeName>
</protein>